<reference key="1">
    <citation type="journal article" date="2001" name="Proc. Natl. Acad. Sci. U.S.A.">
        <title>Complete genome sequence of an M1 strain of Streptococcus pyogenes.</title>
        <authorList>
            <person name="Ferretti J.J."/>
            <person name="McShan W.M."/>
            <person name="Ajdic D.J."/>
            <person name="Savic D.J."/>
            <person name="Savic G."/>
            <person name="Lyon K."/>
            <person name="Primeaux C."/>
            <person name="Sezate S."/>
            <person name="Suvorov A.N."/>
            <person name="Kenton S."/>
            <person name="Lai H.S."/>
            <person name="Lin S.P."/>
            <person name="Qian Y."/>
            <person name="Jia H.G."/>
            <person name="Najar F.Z."/>
            <person name="Ren Q."/>
            <person name="Zhu H."/>
            <person name="Song L."/>
            <person name="White J."/>
            <person name="Yuan X."/>
            <person name="Clifton S.W."/>
            <person name="Roe B.A."/>
            <person name="McLaughlin R.E."/>
        </authorList>
    </citation>
    <scope>NUCLEOTIDE SEQUENCE [LARGE SCALE GENOMIC DNA]</scope>
    <source>
        <strain>ATCC 700294 / SF370 / Serotype M1</strain>
    </source>
</reference>
<reference key="2">
    <citation type="journal article" date="2005" name="J. Infect. Dis.">
        <title>Evolutionary origin and emergence of a highly successful clone of serotype M1 group A Streptococcus involved multiple horizontal gene transfer events.</title>
        <authorList>
            <person name="Sumby P."/>
            <person name="Porcella S.F."/>
            <person name="Madrigal A.G."/>
            <person name="Barbian K.D."/>
            <person name="Virtaneva K."/>
            <person name="Ricklefs S.M."/>
            <person name="Sturdevant D.E."/>
            <person name="Graham M.R."/>
            <person name="Vuopio-Varkila J."/>
            <person name="Hoe N.P."/>
            <person name="Musser J.M."/>
        </authorList>
    </citation>
    <scope>NUCLEOTIDE SEQUENCE [LARGE SCALE GENOMIC DNA]</scope>
    <source>
        <strain>ATCC BAA-947 / MGAS5005 / Serotype M1</strain>
    </source>
</reference>
<feature type="chain" id="PRO_0000329872" description="Polyribonucleotide nucleotidyltransferase">
    <location>
        <begin position="1"/>
        <end position="710"/>
    </location>
</feature>
<feature type="domain" description="KH" evidence="1">
    <location>
        <begin position="556"/>
        <end position="615"/>
    </location>
</feature>
<feature type="domain" description="S1 motif" evidence="1">
    <location>
        <begin position="625"/>
        <end position="693"/>
    </location>
</feature>
<feature type="region of interest" description="Disordered" evidence="2">
    <location>
        <begin position="691"/>
        <end position="710"/>
    </location>
</feature>
<feature type="compositionally biased region" description="Basic and acidic residues" evidence="2">
    <location>
        <begin position="700"/>
        <end position="710"/>
    </location>
</feature>
<feature type="binding site" evidence="1">
    <location>
        <position position="489"/>
    </location>
    <ligand>
        <name>Mg(2+)</name>
        <dbReference type="ChEBI" id="CHEBI:18420"/>
    </ligand>
</feature>
<feature type="binding site" evidence="1">
    <location>
        <position position="495"/>
    </location>
    <ligand>
        <name>Mg(2+)</name>
        <dbReference type="ChEBI" id="CHEBI:18420"/>
    </ligand>
</feature>
<comment type="function">
    <text evidence="1">Involved in mRNA degradation. Catalyzes the phosphorolysis of single-stranded polyribonucleotides processively in the 3'- to 5'-direction.</text>
</comment>
<comment type="catalytic activity">
    <reaction evidence="1">
        <text>RNA(n+1) + phosphate = RNA(n) + a ribonucleoside 5'-diphosphate</text>
        <dbReference type="Rhea" id="RHEA:22096"/>
        <dbReference type="Rhea" id="RHEA-COMP:14527"/>
        <dbReference type="Rhea" id="RHEA-COMP:17342"/>
        <dbReference type="ChEBI" id="CHEBI:43474"/>
        <dbReference type="ChEBI" id="CHEBI:57930"/>
        <dbReference type="ChEBI" id="CHEBI:140395"/>
        <dbReference type="EC" id="2.7.7.8"/>
    </reaction>
</comment>
<comment type="cofactor">
    <cofactor evidence="1">
        <name>Mg(2+)</name>
        <dbReference type="ChEBI" id="CHEBI:18420"/>
    </cofactor>
</comment>
<comment type="subcellular location">
    <subcellularLocation>
        <location evidence="1">Cytoplasm</location>
    </subcellularLocation>
</comment>
<comment type="similarity">
    <text evidence="1">Belongs to the polyribonucleotide nucleotidyltransferase family.</text>
</comment>
<protein>
    <recommendedName>
        <fullName evidence="1">Polyribonucleotide nucleotidyltransferase</fullName>
        <ecNumber evidence="1">2.7.7.8</ecNumber>
    </recommendedName>
    <alternativeName>
        <fullName evidence="1">Polynucleotide phosphorylase</fullName>
        <shortName evidence="1">PNPase</shortName>
    </alternativeName>
</protein>
<name>PNP_STRP1</name>
<keyword id="KW-0963">Cytoplasm</keyword>
<keyword id="KW-0460">Magnesium</keyword>
<keyword id="KW-0479">Metal-binding</keyword>
<keyword id="KW-0548">Nucleotidyltransferase</keyword>
<keyword id="KW-1185">Reference proteome</keyword>
<keyword id="KW-0694">RNA-binding</keyword>
<keyword id="KW-0808">Transferase</keyword>
<gene>
    <name evidence="1" type="primary">pnp</name>
    <name type="ordered locus">SPy_1946</name>
    <name type="ordered locus">M5005_Spy1660</name>
</gene>
<proteinExistence type="inferred from homology"/>
<dbReference type="EC" id="2.7.7.8" evidence="1"/>
<dbReference type="EMBL" id="AE004092">
    <property type="protein sequence ID" value="AAK34643.1"/>
    <property type="molecule type" value="Genomic_DNA"/>
</dbReference>
<dbReference type="EMBL" id="CP000017">
    <property type="protein sequence ID" value="AAZ52278.1"/>
    <property type="molecule type" value="Genomic_DNA"/>
</dbReference>
<dbReference type="RefSeq" id="NP_269922.1">
    <property type="nucleotide sequence ID" value="NC_002737.2"/>
</dbReference>
<dbReference type="SMR" id="Q99XZ5"/>
<dbReference type="PaxDb" id="1314-HKU360_01779"/>
<dbReference type="KEGG" id="spy:SPy_1946"/>
<dbReference type="KEGG" id="spz:M5005_Spy1660"/>
<dbReference type="PATRIC" id="fig|160490.10.peg.1695"/>
<dbReference type="HOGENOM" id="CLU_004217_2_2_9"/>
<dbReference type="OMA" id="RFMFHYN"/>
<dbReference type="Proteomes" id="UP000000750">
    <property type="component" value="Chromosome"/>
</dbReference>
<dbReference type="GO" id="GO:0005829">
    <property type="term" value="C:cytosol"/>
    <property type="evidence" value="ECO:0007669"/>
    <property type="project" value="TreeGrafter"/>
</dbReference>
<dbReference type="GO" id="GO:0000175">
    <property type="term" value="F:3'-5'-RNA exonuclease activity"/>
    <property type="evidence" value="ECO:0007669"/>
    <property type="project" value="TreeGrafter"/>
</dbReference>
<dbReference type="GO" id="GO:0000287">
    <property type="term" value="F:magnesium ion binding"/>
    <property type="evidence" value="ECO:0007669"/>
    <property type="project" value="UniProtKB-UniRule"/>
</dbReference>
<dbReference type="GO" id="GO:0004654">
    <property type="term" value="F:polyribonucleotide nucleotidyltransferase activity"/>
    <property type="evidence" value="ECO:0007669"/>
    <property type="project" value="UniProtKB-UniRule"/>
</dbReference>
<dbReference type="GO" id="GO:0003723">
    <property type="term" value="F:RNA binding"/>
    <property type="evidence" value="ECO:0007669"/>
    <property type="project" value="UniProtKB-UniRule"/>
</dbReference>
<dbReference type="GO" id="GO:0006402">
    <property type="term" value="P:mRNA catabolic process"/>
    <property type="evidence" value="ECO:0007669"/>
    <property type="project" value="UniProtKB-UniRule"/>
</dbReference>
<dbReference type="GO" id="GO:0006396">
    <property type="term" value="P:RNA processing"/>
    <property type="evidence" value="ECO:0007669"/>
    <property type="project" value="InterPro"/>
</dbReference>
<dbReference type="CDD" id="cd02393">
    <property type="entry name" value="KH-I_PNPase"/>
    <property type="match status" value="1"/>
</dbReference>
<dbReference type="CDD" id="cd11363">
    <property type="entry name" value="RNase_PH_PNPase_1"/>
    <property type="match status" value="1"/>
</dbReference>
<dbReference type="CDD" id="cd11364">
    <property type="entry name" value="RNase_PH_PNPase_2"/>
    <property type="match status" value="1"/>
</dbReference>
<dbReference type="FunFam" id="2.40.50.140:FF:000023">
    <property type="entry name" value="Polyribonucleotide nucleotidyltransferase"/>
    <property type="match status" value="1"/>
</dbReference>
<dbReference type="FunFam" id="3.30.1370.10:FF:000001">
    <property type="entry name" value="Polyribonucleotide nucleotidyltransferase"/>
    <property type="match status" value="1"/>
</dbReference>
<dbReference type="FunFam" id="3.30.230.70:FF:000001">
    <property type="entry name" value="Polyribonucleotide nucleotidyltransferase"/>
    <property type="match status" value="1"/>
</dbReference>
<dbReference type="FunFam" id="3.30.230.70:FF:000002">
    <property type="entry name" value="Polyribonucleotide nucleotidyltransferase"/>
    <property type="match status" value="1"/>
</dbReference>
<dbReference type="Gene3D" id="3.30.230.70">
    <property type="entry name" value="GHMP Kinase, N-terminal domain"/>
    <property type="match status" value="2"/>
</dbReference>
<dbReference type="Gene3D" id="3.30.1370.10">
    <property type="entry name" value="K Homology domain, type 1"/>
    <property type="match status" value="1"/>
</dbReference>
<dbReference type="Gene3D" id="2.40.50.140">
    <property type="entry name" value="Nucleic acid-binding proteins"/>
    <property type="match status" value="1"/>
</dbReference>
<dbReference type="HAMAP" id="MF_01595">
    <property type="entry name" value="PNPase"/>
    <property type="match status" value="1"/>
</dbReference>
<dbReference type="InterPro" id="IPR001247">
    <property type="entry name" value="ExoRNase_PH_dom1"/>
</dbReference>
<dbReference type="InterPro" id="IPR015847">
    <property type="entry name" value="ExoRNase_PH_dom2"/>
</dbReference>
<dbReference type="InterPro" id="IPR036345">
    <property type="entry name" value="ExoRNase_PH_dom2_sf"/>
</dbReference>
<dbReference type="InterPro" id="IPR004087">
    <property type="entry name" value="KH_dom"/>
</dbReference>
<dbReference type="InterPro" id="IPR004088">
    <property type="entry name" value="KH_dom_type_1"/>
</dbReference>
<dbReference type="InterPro" id="IPR036612">
    <property type="entry name" value="KH_dom_type_1_sf"/>
</dbReference>
<dbReference type="InterPro" id="IPR012340">
    <property type="entry name" value="NA-bd_OB-fold"/>
</dbReference>
<dbReference type="InterPro" id="IPR012162">
    <property type="entry name" value="PNPase"/>
</dbReference>
<dbReference type="InterPro" id="IPR027408">
    <property type="entry name" value="PNPase/RNase_PH_dom_sf"/>
</dbReference>
<dbReference type="InterPro" id="IPR015848">
    <property type="entry name" value="PNPase_PH_RNA-bd_bac/org-type"/>
</dbReference>
<dbReference type="InterPro" id="IPR036456">
    <property type="entry name" value="PNPase_PH_RNA-bd_sf"/>
</dbReference>
<dbReference type="InterPro" id="IPR020568">
    <property type="entry name" value="Ribosomal_Su5_D2-typ_SF"/>
</dbReference>
<dbReference type="InterPro" id="IPR003029">
    <property type="entry name" value="S1_domain"/>
</dbReference>
<dbReference type="NCBIfam" id="TIGR03591">
    <property type="entry name" value="polynuc_phos"/>
    <property type="match status" value="1"/>
</dbReference>
<dbReference type="NCBIfam" id="NF008805">
    <property type="entry name" value="PRK11824.1"/>
    <property type="match status" value="1"/>
</dbReference>
<dbReference type="PANTHER" id="PTHR11252">
    <property type="entry name" value="POLYRIBONUCLEOTIDE NUCLEOTIDYLTRANSFERASE"/>
    <property type="match status" value="1"/>
</dbReference>
<dbReference type="PANTHER" id="PTHR11252:SF0">
    <property type="entry name" value="POLYRIBONUCLEOTIDE NUCLEOTIDYLTRANSFERASE 1, MITOCHONDRIAL"/>
    <property type="match status" value="1"/>
</dbReference>
<dbReference type="Pfam" id="PF00013">
    <property type="entry name" value="KH_1"/>
    <property type="match status" value="1"/>
</dbReference>
<dbReference type="Pfam" id="PF03726">
    <property type="entry name" value="PNPase"/>
    <property type="match status" value="1"/>
</dbReference>
<dbReference type="Pfam" id="PF01138">
    <property type="entry name" value="RNase_PH"/>
    <property type="match status" value="2"/>
</dbReference>
<dbReference type="Pfam" id="PF03725">
    <property type="entry name" value="RNase_PH_C"/>
    <property type="match status" value="2"/>
</dbReference>
<dbReference type="Pfam" id="PF00575">
    <property type="entry name" value="S1"/>
    <property type="match status" value="1"/>
</dbReference>
<dbReference type="PIRSF" id="PIRSF005499">
    <property type="entry name" value="PNPase"/>
    <property type="match status" value="1"/>
</dbReference>
<dbReference type="SMART" id="SM00322">
    <property type="entry name" value="KH"/>
    <property type="match status" value="1"/>
</dbReference>
<dbReference type="SMART" id="SM00316">
    <property type="entry name" value="S1"/>
    <property type="match status" value="1"/>
</dbReference>
<dbReference type="SUPFAM" id="SSF54791">
    <property type="entry name" value="Eukaryotic type KH-domain (KH-domain type I)"/>
    <property type="match status" value="1"/>
</dbReference>
<dbReference type="SUPFAM" id="SSF50249">
    <property type="entry name" value="Nucleic acid-binding proteins"/>
    <property type="match status" value="1"/>
</dbReference>
<dbReference type="SUPFAM" id="SSF46915">
    <property type="entry name" value="Polynucleotide phosphorylase/guanosine pentaphosphate synthase (PNPase/GPSI), domain 3"/>
    <property type="match status" value="1"/>
</dbReference>
<dbReference type="SUPFAM" id="SSF55666">
    <property type="entry name" value="Ribonuclease PH domain 2-like"/>
    <property type="match status" value="2"/>
</dbReference>
<dbReference type="SUPFAM" id="SSF54211">
    <property type="entry name" value="Ribosomal protein S5 domain 2-like"/>
    <property type="match status" value="2"/>
</dbReference>
<dbReference type="PROSITE" id="PS50084">
    <property type="entry name" value="KH_TYPE_1"/>
    <property type="match status" value="1"/>
</dbReference>
<dbReference type="PROSITE" id="PS50126">
    <property type="entry name" value="S1"/>
    <property type="match status" value="1"/>
</dbReference>
<organism>
    <name type="scientific">Streptococcus pyogenes serotype M1</name>
    <dbReference type="NCBI Taxonomy" id="301447"/>
    <lineage>
        <taxon>Bacteria</taxon>
        <taxon>Bacillati</taxon>
        <taxon>Bacillota</taxon>
        <taxon>Bacilli</taxon>
        <taxon>Lactobacillales</taxon>
        <taxon>Streptococcaceae</taxon>
        <taxon>Streptococcus</taxon>
    </lineage>
</organism>
<sequence length="710" mass="77397">MSKQTFTTTFAGKPLVVEVGQVAKQANGATVVRYGDSTVLTAAVMSKKMATGDFFPLQVNYEEKMYAAGKFPGGFMKREGRPSTDATLTARLIDRPIRPMFAEGFRNEVQVINTVLSYDENASAPMAAMFGSSLALSISDIPFNGPIAGVQVGYIDGEFIINPDKEQMEASLLELTVAGSKEAINMVESGAKELSEDIMLEALLKGHQAIQELIAFQEQIVAVVGKEKAEVELLQVDVDLQADIVAKYNAQLQKAVQVEEKKAREAATEAVKEMVKAEYEERYAEDENLATIMRDVAEILEQMEHAEVRRLITEDKIRPDGRKIDEIRPLDAVVDFLPKVHGSGLFTRGQTQALSVLTLAPMGETQIIDGLAPEYKKRFLHHYNFPQYSVGETGRYGAAGRREIGHGALGERALEQVLPSLEEFPYAIRLVAEVLESNGSSSQASICAGTLALMAGGVPIKAPVAGIAMGLISDGTNYTVLTDIQGLEDHFGDMDFKVAGTREGITALQMDIKIAGITPQILEEALAQAKKARFEILDVIEATIAEPRPELAPTAPKIDTIKIDVDKIKVVIGKGGETIDKIIAETGVKIDIDDEGNVSIYSSDQAAIDRTKEIIAGLVREAKVGEVYHAKVVRIEKFGAFVNLFDKTDALVHISEIAWTRTTNVSDVLEVGEDVDVKVIKIDEKGRVDASMKALIPRPPKPEKKEEKHD</sequence>
<evidence type="ECO:0000255" key="1">
    <source>
        <dbReference type="HAMAP-Rule" id="MF_01595"/>
    </source>
</evidence>
<evidence type="ECO:0000256" key="2">
    <source>
        <dbReference type="SAM" id="MobiDB-lite"/>
    </source>
</evidence>
<accession>Q99XZ5</accession>
<accession>Q48WJ7</accession>